<dbReference type="EMBL" id="AE004091">
    <property type="protein sequence ID" value="AAG03485.1"/>
    <property type="molecule type" value="Genomic_DNA"/>
</dbReference>
<dbReference type="PIR" id="D83633">
    <property type="entry name" value="D83633"/>
</dbReference>
<dbReference type="RefSeq" id="NP_248785.1">
    <property type="nucleotide sequence ID" value="NC_002516.2"/>
</dbReference>
<dbReference type="RefSeq" id="WP_003147059.1">
    <property type="nucleotide sequence ID" value="NZ_QZGE01000015.1"/>
</dbReference>
<dbReference type="SMR" id="Q9I737"/>
<dbReference type="STRING" id="208964.PA0095"/>
<dbReference type="PaxDb" id="208964-PA0095"/>
<dbReference type="GeneID" id="880726"/>
<dbReference type="KEGG" id="pae:PA0095"/>
<dbReference type="PATRIC" id="fig|208964.12.peg.99"/>
<dbReference type="PseudoCAP" id="PA0095"/>
<dbReference type="HOGENOM" id="CLU_004121_3_0_6"/>
<dbReference type="InParanoid" id="Q9I737"/>
<dbReference type="OrthoDB" id="9762420at2"/>
<dbReference type="PhylomeDB" id="Q9I737"/>
<dbReference type="BioCyc" id="PAER208964:G1FZ6-97-MONOMER"/>
<dbReference type="Proteomes" id="UP000002438">
    <property type="component" value="Chromosome"/>
</dbReference>
<dbReference type="GO" id="GO:0005576">
    <property type="term" value="C:extracellular region"/>
    <property type="evidence" value="ECO:0007669"/>
    <property type="project" value="UniProtKB-SubCell"/>
</dbReference>
<dbReference type="GO" id="GO:0033104">
    <property type="term" value="C:type VI protein secretion system complex"/>
    <property type="evidence" value="ECO:0000315"/>
    <property type="project" value="PseudoCAP"/>
</dbReference>
<dbReference type="GO" id="GO:0033103">
    <property type="term" value="P:protein secretion by the type VI secretion system"/>
    <property type="evidence" value="ECO:0000315"/>
    <property type="project" value="PseudoCAP"/>
</dbReference>
<dbReference type="FunFam" id="3.55.50.10:FF:000001">
    <property type="entry name" value="Actin cross-linking toxin VgrG1"/>
    <property type="match status" value="1"/>
</dbReference>
<dbReference type="FunFam" id="2.40.50.230:FF:000001">
    <property type="entry name" value="Type VI secretion protein VgrG"/>
    <property type="match status" value="1"/>
</dbReference>
<dbReference type="FunFam" id="4.10.220.110:FF:000001">
    <property type="entry name" value="VgrG1"/>
    <property type="match status" value="1"/>
</dbReference>
<dbReference type="Gene3D" id="2.30.110.50">
    <property type="match status" value="1"/>
</dbReference>
<dbReference type="Gene3D" id="4.10.220.110">
    <property type="match status" value="1"/>
</dbReference>
<dbReference type="Gene3D" id="3.55.50.10">
    <property type="entry name" value="Baseplate protein-like domains"/>
    <property type="match status" value="1"/>
</dbReference>
<dbReference type="Gene3D" id="2.40.50.230">
    <property type="entry name" value="Gp5 N-terminal domain"/>
    <property type="match status" value="1"/>
</dbReference>
<dbReference type="InterPro" id="IPR006531">
    <property type="entry name" value="Gp5/Vgr_OB"/>
</dbReference>
<dbReference type="InterPro" id="IPR054030">
    <property type="entry name" value="Gp5_Vgr_C"/>
</dbReference>
<dbReference type="InterPro" id="IPR017847">
    <property type="entry name" value="T6SS_RhsGE_Vgr_subset"/>
</dbReference>
<dbReference type="InterPro" id="IPR006533">
    <property type="entry name" value="T6SS_Vgr_RhsGE"/>
</dbReference>
<dbReference type="InterPro" id="IPR050708">
    <property type="entry name" value="T6SS_VgrG/RHS"/>
</dbReference>
<dbReference type="InterPro" id="IPR037026">
    <property type="entry name" value="Vgr_OB-fold_dom_sf"/>
</dbReference>
<dbReference type="NCBIfam" id="TIGR01646">
    <property type="entry name" value="vgr_GE"/>
    <property type="match status" value="1"/>
</dbReference>
<dbReference type="NCBIfam" id="TIGR03361">
    <property type="entry name" value="VI_Rhs_Vgr"/>
    <property type="match status" value="1"/>
</dbReference>
<dbReference type="PANTHER" id="PTHR32305">
    <property type="match status" value="1"/>
</dbReference>
<dbReference type="PANTHER" id="PTHR32305:SF15">
    <property type="entry name" value="PROTEIN RHSA-RELATED"/>
    <property type="match status" value="1"/>
</dbReference>
<dbReference type="Pfam" id="PF22178">
    <property type="entry name" value="Gp5_trimer_C"/>
    <property type="match status" value="2"/>
</dbReference>
<dbReference type="Pfam" id="PF04717">
    <property type="entry name" value="Phage_base_V"/>
    <property type="match status" value="1"/>
</dbReference>
<dbReference type="Pfam" id="PF05954">
    <property type="entry name" value="Phage_GPD"/>
    <property type="match status" value="1"/>
</dbReference>
<dbReference type="SUPFAM" id="SSF69255">
    <property type="entry name" value="gp5 N-terminal domain-like"/>
    <property type="match status" value="1"/>
</dbReference>
<dbReference type="SUPFAM" id="SSF69349">
    <property type="entry name" value="Phage fibre proteins"/>
    <property type="match status" value="2"/>
</dbReference>
<dbReference type="SUPFAM" id="SSF69279">
    <property type="entry name" value="Phage tail proteins"/>
    <property type="match status" value="2"/>
</dbReference>
<gene>
    <name evidence="5" type="primary">vgrG1b</name>
    <name type="ordered locus">PA0095</name>
</gene>
<organism>
    <name type="scientific">Pseudomonas aeruginosa (strain ATCC 15692 / DSM 22644 / CIP 104116 / JCM 14847 / LMG 12228 / 1C / PRS 101 / PAO1)</name>
    <dbReference type="NCBI Taxonomy" id="208964"/>
    <lineage>
        <taxon>Bacteria</taxon>
        <taxon>Pseudomonadati</taxon>
        <taxon>Pseudomonadota</taxon>
        <taxon>Gammaproteobacteria</taxon>
        <taxon>Pseudomonadales</taxon>
        <taxon>Pseudomonadaceae</taxon>
        <taxon>Pseudomonas</taxon>
    </lineage>
</organism>
<feature type="chain" id="PRO_0000448912" description="Type VI secretion system spike protein VgrG1b">
    <location>
        <begin position="1"/>
        <end position="741"/>
    </location>
</feature>
<feature type="region of interest" description="Disordered" evidence="1">
    <location>
        <begin position="614"/>
        <end position="678"/>
    </location>
</feature>
<feature type="compositionally biased region" description="Polar residues" evidence="1">
    <location>
        <begin position="614"/>
        <end position="629"/>
    </location>
</feature>
<feature type="compositionally biased region" description="Polar residues" evidence="1">
    <location>
        <begin position="649"/>
        <end position="663"/>
    </location>
</feature>
<proteinExistence type="inferred from homology"/>
<accession>Q9I737</accession>
<name>VGR1B_PSEAE</name>
<evidence type="ECO:0000256" key="1">
    <source>
        <dbReference type="SAM" id="MobiDB-lite"/>
    </source>
</evidence>
<evidence type="ECO:0000269" key="2">
    <source>
    </source>
</evidence>
<evidence type="ECO:0000269" key="3">
    <source>
    </source>
</evidence>
<evidence type="ECO:0000269" key="4">
    <source>
    </source>
</evidence>
<evidence type="ECO:0000303" key="5">
    <source>
    </source>
</evidence>
<evidence type="ECO:0000305" key="6"/>
<sequence>MALAQQTRLVRVDSPLGAEVLQLQRMEGREELGRPFAYELELISENPDLPLDGLLGKPASLALELHDGSRRHFHGIVAACSQGSGNGQFASYQVTLRPWLWLLTRTSDCRIFQNQKVPDIIKQVFRDLGFSDFEDALSRSYREWEYCVQYRETSFDFVSRLMEQEGIYYWFRHEQSRHILVLSDAYGAHQSPPNYASVPYYPPTLEQRERDHFYDWHMAREVQSGSLSLNDYDFQRPGARLEVRSNIARSHAAADYPLYDYPGEYVQSQDGEQYARTRIEALQARYERVRLRGRARGLGSGHLFKLSGYPREDQNREYLVVGAEYRVVQELYETGGGGVGAQFESELDCIDAGQAYRPLPTTPLPIVRGPQTAVVVGPKGEEIWTDQYGRVKVHFHWDRHDQSNENSSCWIRVSQAWAGKNWGSMQIPRIGQEVIVSFLEGDPDRPIITGRVYNAEQTVPYELPANATQSGMKSRSSKGGTPANFNEIRMEDKKGAEQLFIHAEKNQDIEVENDETHWVGHDRTKTIDHDETVHVKHDRTETVDNNETITIGVDRTEKVGNNEKISIGANRTEDVGSNETISIGVDRTEKVGSNEKISIGANRTEDVGNDETISIGANRSESVGNNETISIGADRSESVGANETIDIGGNQSTSIGKNESRSVGQGRDTSVGKDDSLDVGKSFTLNAGDSITLVTGAASIRMKKDGSIVISGKNITIDGSGAINVKADKNVVVKGRKILQN</sequence>
<protein>
    <recommendedName>
        <fullName evidence="5">Type VI secretion system spike protein VgrG1b</fullName>
    </recommendedName>
</protein>
<comment type="function">
    <text evidence="2 3 4">Part of the H1 type VI secretion system (H1-T6SS) specialized secretion system, which delivers several virulence factors in both prokaryotic and eukaryotic cells during infection (PubMed:21325275, PubMed:24794869). Allows the delivery of the Tse7 toxin to target cells where it exerts toxicity through its nuclease domain (PubMed:24794869, PubMed:30455305).</text>
</comment>
<comment type="subcellular location">
    <subcellularLocation>
        <location evidence="2">Secreted</location>
    </subcellularLocation>
</comment>
<comment type="disruption phenotype">
    <text evidence="2 3">Deletion neither impacts secretion of components of the H1-T6SS nor requires H1-T6SS components for its own secretion (PubMed:21325275). However, simultaneous deletion of all three vgrG genes (vgrG1a, vgrG1b and vgrG1c) totally abrogates bacterial killing (PubMed:24794869).</text>
</comment>
<comment type="similarity">
    <text evidence="6">Belongs to the VgrG protein family.</text>
</comment>
<reference key="1">
    <citation type="journal article" date="2000" name="Nature">
        <title>Complete genome sequence of Pseudomonas aeruginosa PAO1, an opportunistic pathogen.</title>
        <authorList>
            <person name="Stover C.K."/>
            <person name="Pham X.-Q.T."/>
            <person name="Erwin A.L."/>
            <person name="Mizoguchi S.D."/>
            <person name="Warrener P."/>
            <person name="Hickey M.J."/>
            <person name="Brinkman F.S.L."/>
            <person name="Hufnagle W.O."/>
            <person name="Kowalik D.J."/>
            <person name="Lagrou M."/>
            <person name="Garber R.L."/>
            <person name="Goltry L."/>
            <person name="Tolentino E."/>
            <person name="Westbrock-Wadman S."/>
            <person name="Yuan Y."/>
            <person name="Brody L.L."/>
            <person name="Coulter S.N."/>
            <person name="Folger K.R."/>
            <person name="Kas A."/>
            <person name="Larbig K."/>
            <person name="Lim R.M."/>
            <person name="Smith K.A."/>
            <person name="Spencer D.H."/>
            <person name="Wong G.K.-S."/>
            <person name="Wu Z."/>
            <person name="Paulsen I.T."/>
            <person name="Reizer J."/>
            <person name="Saier M.H. Jr."/>
            <person name="Hancock R.E.W."/>
            <person name="Lory S."/>
            <person name="Olson M.V."/>
        </authorList>
    </citation>
    <scope>NUCLEOTIDE SEQUENCE [LARGE SCALE GENOMIC DNA]</scope>
    <source>
        <strain>ATCC 15692 / DSM 22644 / CIP 104116 / JCM 14847 / LMG 12228 / 1C / PRS 101 / PAO1</strain>
    </source>
</reference>
<reference key="2">
    <citation type="journal article" date="2011" name="J. Biol. Chem.">
        <title>Type VI secretion system in Pseudomonas aeruginosa: secretion and multimerization of VgrG proteins.</title>
        <authorList>
            <person name="Hachani A."/>
            <person name="Lossi N.S."/>
            <person name="Hamilton A."/>
            <person name="Jones C."/>
            <person name="Bleves S."/>
            <person name="Albesa-Jove D."/>
            <person name="Filloux A."/>
        </authorList>
    </citation>
    <scope>FUNCTION</scope>
    <scope>SUBCELLULAR LOCATION</scope>
    <scope>DISRUPTION PHENOTYPE</scope>
    <source>
        <strain>ATCC 15692 / DSM 22644 / CIP 104116 / JCM 14847 / LMG 12228 / 1C / PRS 101 / PAO1</strain>
    </source>
</reference>
<reference key="3">
    <citation type="journal article" date="2014" name="J. Biol. Chem.">
        <title>The VgrG proteins are 'a la carte' delivery systems for bacterial type VI effectors.</title>
        <authorList>
            <person name="Hachani A."/>
            <person name="Allsopp L.P."/>
            <person name="Oduko Y."/>
            <person name="Filloux A."/>
        </authorList>
    </citation>
    <scope>FUNCTION</scope>
    <scope>DISRUPTION PHENOTYPE</scope>
    <source>
        <strain>PAK</strain>
    </source>
</reference>
<reference key="4">
    <citation type="journal article" date="2018" name="Proc. Natl. Acad. Sci. U.S.A.">
        <title>The Pseudomonas aeruginosa T6SS-VgrG1b spike is topped by a PAAR protein eliciting DNA damage to bacterial competitors.</title>
        <authorList>
            <person name="Pissaridou P."/>
            <person name="Allsopp L.P."/>
            <person name="Wettstadt S."/>
            <person name="Howard S.A."/>
            <person name="Mavridou D.A.I."/>
            <person name="Filloux A."/>
        </authorList>
    </citation>
    <scope>FUNCTION</scope>
    <source>
        <strain>ATCC 15692 / DSM 22644 / CIP 104116 / JCM 14847 / LMG 12228 / 1C / PRS 101 / PAO1</strain>
    </source>
</reference>
<keyword id="KW-1185">Reference proteome</keyword>
<keyword id="KW-0964">Secreted</keyword>